<sequence length="127" mass="13943">MEMTYYEKTPLIRQFLNNGKTNSWFYVKHEMLQPGGSFKSRGIGHLIRKSNEEALSEGSGKLAVFSSSGGNAGLAAATACRSMALNCSVVVPKTTKPRMVKKIQSAGAKVIIHGDHWGEADEYLRHE</sequence>
<feature type="chain" id="PRO_0000393393" description="Putative truncated L-serine dehydratase YIL168W">
    <location>
        <begin position="1"/>
        <end position="127"/>
    </location>
</feature>
<feature type="modified residue" description="N6-(pyridoxal phosphate)lysine" evidence="1">
    <location>
        <position position="39"/>
    </location>
</feature>
<protein>
    <recommendedName>
        <fullName>Putative truncated L-serine dehydratase YIL168W</fullName>
        <ecNumber>4.3.1.17</ecNumber>
    </recommendedName>
</protein>
<accession>P0CF21</accession>
<accession>P17324</accession>
<accession>P40443</accession>
<accession>P40444</accession>
<accession>Q6Q579</accession>
<gene>
    <name type="ordered locus">YIL168W</name>
    <name type="ORF">YI9402.08A</name>
</gene>
<reference key="1">
    <citation type="journal article" date="1997" name="Nature">
        <title>The nucleotide sequence of Saccharomyces cerevisiae chromosome IX.</title>
        <authorList>
            <person name="Churcher C.M."/>
            <person name="Bowman S."/>
            <person name="Badcock K."/>
            <person name="Bankier A.T."/>
            <person name="Brown D."/>
            <person name="Chillingworth T."/>
            <person name="Connor R."/>
            <person name="Devlin K."/>
            <person name="Gentles S."/>
            <person name="Hamlin N."/>
            <person name="Harris D.E."/>
            <person name="Horsnell T."/>
            <person name="Hunt S."/>
            <person name="Jagels K."/>
            <person name="Jones M."/>
            <person name="Lye G."/>
            <person name="Moule S."/>
            <person name="Odell C."/>
            <person name="Pearson D."/>
            <person name="Rajandream M.A."/>
            <person name="Rice P."/>
            <person name="Rowley N."/>
            <person name="Skelton J."/>
            <person name="Smith V."/>
            <person name="Walsh S.V."/>
            <person name="Whitehead S."/>
            <person name="Barrell B.G."/>
        </authorList>
    </citation>
    <scope>NUCLEOTIDE SEQUENCE [LARGE SCALE GENOMIC DNA]</scope>
    <source>
        <strain>ATCC 204508 / S288c</strain>
    </source>
</reference>
<reference key="2">
    <citation type="journal article" date="2014" name="G3 (Bethesda)">
        <title>The reference genome sequence of Saccharomyces cerevisiae: Then and now.</title>
        <authorList>
            <person name="Engel S.R."/>
            <person name="Dietrich F.S."/>
            <person name="Fisk D.G."/>
            <person name="Binkley G."/>
            <person name="Balakrishnan R."/>
            <person name="Costanzo M.C."/>
            <person name="Dwight S.S."/>
            <person name="Hitz B.C."/>
            <person name="Karra K."/>
            <person name="Nash R.S."/>
            <person name="Weng S."/>
            <person name="Wong E.D."/>
            <person name="Lloyd P."/>
            <person name="Skrzypek M.S."/>
            <person name="Miyasato S.R."/>
            <person name="Simison M."/>
            <person name="Cherry J.M."/>
        </authorList>
    </citation>
    <scope>GENOME REANNOTATION</scope>
    <source>
        <strain>ATCC 204508 / S288c</strain>
    </source>
</reference>
<reference key="3">
    <citation type="journal article" date="2007" name="Genome Res.">
        <title>Approaching a complete repository of sequence-verified protein-encoding clones for Saccharomyces cerevisiae.</title>
        <authorList>
            <person name="Hu Y."/>
            <person name="Rolfs A."/>
            <person name="Bhullar B."/>
            <person name="Murthy T.V.S."/>
            <person name="Zhu C."/>
            <person name="Berger M.F."/>
            <person name="Camargo A.A."/>
            <person name="Kelley F."/>
            <person name="McCarron S."/>
            <person name="Jepson D."/>
            <person name="Richardson A."/>
            <person name="Raphael J."/>
            <person name="Moreira D."/>
            <person name="Taycher E."/>
            <person name="Zuo D."/>
            <person name="Mohr S."/>
            <person name="Kane M.F."/>
            <person name="Williamson J."/>
            <person name="Simpson A.J.G."/>
            <person name="Bulyk M.L."/>
            <person name="Harlow E."/>
            <person name="Marsischky G."/>
            <person name="Kolodner R.D."/>
            <person name="LaBaer J."/>
        </authorList>
    </citation>
    <scope>NUCLEOTIDE SEQUENCE [GENOMIC DNA]</scope>
    <source>
        <strain>ATCC 204508 / S288c</strain>
    </source>
</reference>
<organism>
    <name type="scientific">Saccharomyces cerevisiae (strain ATCC 204508 / S288c)</name>
    <name type="common">Baker's yeast</name>
    <dbReference type="NCBI Taxonomy" id="559292"/>
    <lineage>
        <taxon>Eukaryota</taxon>
        <taxon>Fungi</taxon>
        <taxon>Dikarya</taxon>
        <taxon>Ascomycota</taxon>
        <taxon>Saccharomycotina</taxon>
        <taxon>Saccharomycetes</taxon>
        <taxon>Saccharomycetales</taxon>
        <taxon>Saccharomycetaceae</taxon>
        <taxon>Saccharomyces</taxon>
    </lineage>
</organism>
<dbReference type="EC" id="4.3.1.17"/>
<dbReference type="EMBL" id="Z46921">
    <property type="protein sequence ID" value="CAA87024.1"/>
    <property type="molecule type" value="Genomic_DNA"/>
</dbReference>
<dbReference type="EMBL" id="AY558344">
    <property type="protein sequence ID" value="AAS56670.1"/>
    <property type="molecule type" value="Genomic_DNA"/>
</dbReference>
<dbReference type="PIR" id="S12731">
    <property type="entry name" value="S12731"/>
</dbReference>
<dbReference type="SMR" id="P0CF21"/>
<dbReference type="SGD" id="S000001430">
    <property type="gene designation" value="YIL168W"/>
</dbReference>
<dbReference type="UniPathway" id="UPA00138"/>
<dbReference type="GO" id="GO:0005737">
    <property type="term" value="C:cytoplasm"/>
    <property type="evidence" value="ECO:0007669"/>
    <property type="project" value="UniProtKB-SubCell"/>
</dbReference>
<dbReference type="GO" id="GO:0003941">
    <property type="term" value="F:L-serine ammonia-lyase activity"/>
    <property type="evidence" value="ECO:0007669"/>
    <property type="project" value="UniProtKB-EC"/>
</dbReference>
<dbReference type="GO" id="GO:0030170">
    <property type="term" value="F:pyridoxal phosphate binding"/>
    <property type="evidence" value="ECO:0007669"/>
    <property type="project" value="InterPro"/>
</dbReference>
<dbReference type="GO" id="GO:0004794">
    <property type="term" value="F:threonine deaminase activity"/>
    <property type="evidence" value="ECO:0007669"/>
    <property type="project" value="UniProtKB-ARBA"/>
</dbReference>
<dbReference type="GO" id="GO:0006520">
    <property type="term" value="P:amino acid metabolic process"/>
    <property type="evidence" value="ECO:0007669"/>
    <property type="project" value="InterPro"/>
</dbReference>
<dbReference type="GO" id="GO:0006094">
    <property type="term" value="P:gluconeogenesis"/>
    <property type="evidence" value="ECO:0007669"/>
    <property type="project" value="UniProtKB-UniPathway"/>
</dbReference>
<dbReference type="FunFam" id="3.40.50.1100:FF:000040">
    <property type="entry name" value="L-serine dehydratase, putative"/>
    <property type="match status" value="1"/>
</dbReference>
<dbReference type="Gene3D" id="3.40.50.1100">
    <property type="match status" value="2"/>
</dbReference>
<dbReference type="InterPro" id="IPR050147">
    <property type="entry name" value="Ser/Thr_Dehydratase"/>
</dbReference>
<dbReference type="InterPro" id="IPR000634">
    <property type="entry name" value="Ser/Thr_deHydtase_PyrdxlP-BS"/>
</dbReference>
<dbReference type="InterPro" id="IPR001926">
    <property type="entry name" value="TrpB-like_PALP"/>
</dbReference>
<dbReference type="InterPro" id="IPR036052">
    <property type="entry name" value="TrpB-like_PALP_sf"/>
</dbReference>
<dbReference type="PANTHER" id="PTHR48078:SF2">
    <property type="entry name" value="CATABOLIC L-SERINE_THREONINE DEHYDRATASE"/>
    <property type="match status" value="1"/>
</dbReference>
<dbReference type="PANTHER" id="PTHR48078">
    <property type="entry name" value="THREONINE DEHYDRATASE, MITOCHONDRIAL-RELATED"/>
    <property type="match status" value="1"/>
</dbReference>
<dbReference type="Pfam" id="PF00291">
    <property type="entry name" value="PALP"/>
    <property type="match status" value="1"/>
</dbReference>
<dbReference type="SUPFAM" id="SSF53686">
    <property type="entry name" value="Tryptophan synthase beta subunit-like PLP-dependent enzymes"/>
    <property type="match status" value="1"/>
</dbReference>
<dbReference type="PROSITE" id="PS00165">
    <property type="entry name" value="DEHYDRATASE_SER_THR"/>
    <property type="match status" value="1"/>
</dbReference>
<name>YI168_YEAST</name>
<keyword id="KW-0963">Cytoplasm</keyword>
<keyword id="KW-0312">Gluconeogenesis</keyword>
<keyword id="KW-0456">Lyase</keyword>
<keyword id="KW-0663">Pyridoxal phosphate</keyword>
<proteinExistence type="uncertain"/>
<comment type="catalytic activity">
    <reaction>
        <text>L-serine = pyruvate + NH4(+)</text>
        <dbReference type="Rhea" id="RHEA:19169"/>
        <dbReference type="ChEBI" id="CHEBI:15361"/>
        <dbReference type="ChEBI" id="CHEBI:28938"/>
        <dbReference type="ChEBI" id="CHEBI:33384"/>
        <dbReference type="EC" id="4.3.1.17"/>
    </reaction>
</comment>
<comment type="cofactor">
    <cofactor evidence="1">
        <name>pyridoxal 5'-phosphate</name>
        <dbReference type="ChEBI" id="CHEBI:597326"/>
    </cofactor>
</comment>
<comment type="pathway">
    <text>Carbohydrate biosynthesis; gluconeogenesis.</text>
</comment>
<comment type="subcellular location">
    <subcellularLocation>
        <location evidence="1">Cytoplasm</location>
    </subcellularLocation>
</comment>
<comment type="similarity">
    <text evidence="2">Belongs to the serine/threonine dehydratase family.</text>
</comment>
<comment type="caution">
    <text evidence="3">Could be the product of a pseudogene unlikely to encode a functional protein. This is a truncated version of L-serine dehydratase. Strain S288c has a stop codon in position 128, which disrupts the gene coding for this protein and produces two ORFs YIL167W and YIL168W. Because of that it is not part of the S.cerevisiae S288c complete/reference proteome set. A contiguous sequence for L-serine dehydratase can be found in other strain backgrounds (AC P0CF23).</text>
</comment>
<evidence type="ECO:0000250" key="1"/>
<evidence type="ECO:0000305" key="2"/>
<evidence type="ECO:0000305" key="3">
    <source>
    </source>
</evidence>